<organism>
    <name type="scientific">Shewanella denitrificans (strain OS217 / ATCC BAA-1090 / DSM 15013)</name>
    <dbReference type="NCBI Taxonomy" id="318161"/>
    <lineage>
        <taxon>Bacteria</taxon>
        <taxon>Pseudomonadati</taxon>
        <taxon>Pseudomonadota</taxon>
        <taxon>Gammaproteobacteria</taxon>
        <taxon>Alteromonadales</taxon>
        <taxon>Shewanellaceae</taxon>
        <taxon>Shewanella</taxon>
    </lineage>
</organism>
<protein>
    <recommendedName>
        <fullName evidence="1">Cytidylate kinase</fullName>
        <shortName evidence="1">CK</shortName>
        <ecNumber evidence="1">2.7.4.25</ecNumber>
    </recommendedName>
    <alternativeName>
        <fullName evidence="1">Cytidine monophosphate kinase</fullName>
        <shortName evidence="1">CMP kinase</shortName>
    </alternativeName>
</protein>
<gene>
    <name evidence="1" type="primary">cmk</name>
    <name type="ordered locus">Sden_1752</name>
</gene>
<evidence type="ECO:0000255" key="1">
    <source>
        <dbReference type="HAMAP-Rule" id="MF_00238"/>
    </source>
</evidence>
<feature type="chain" id="PRO_1000048274" description="Cytidylate kinase">
    <location>
        <begin position="1"/>
        <end position="227"/>
    </location>
</feature>
<feature type="binding site" evidence="1">
    <location>
        <begin position="12"/>
        <end position="20"/>
    </location>
    <ligand>
        <name>ATP</name>
        <dbReference type="ChEBI" id="CHEBI:30616"/>
    </ligand>
</feature>
<keyword id="KW-0067">ATP-binding</keyword>
<keyword id="KW-0963">Cytoplasm</keyword>
<keyword id="KW-0418">Kinase</keyword>
<keyword id="KW-0547">Nucleotide-binding</keyword>
<keyword id="KW-1185">Reference proteome</keyword>
<keyword id="KW-0808">Transferase</keyword>
<accession>Q12NE0</accession>
<comment type="catalytic activity">
    <reaction evidence="1">
        <text>CMP + ATP = CDP + ADP</text>
        <dbReference type="Rhea" id="RHEA:11600"/>
        <dbReference type="ChEBI" id="CHEBI:30616"/>
        <dbReference type="ChEBI" id="CHEBI:58069"/>
        <dbReference type="ChEBI" id="CHEBI:60377"/>
        <dbReference type="ChEBI" id="CHEBI:456216"/>
        <dbReference type="EC" id="2.7.4.25"/>
    </reaction>
</comment>
<comment type="catalytic activity">
    <reaction evidence="1">
        <text>dCMP + ATP = dCDP + ADP</text>
        <dbReference type="Rhea" id="RHEA:25094"/>
        <dbReference type="ChEBI" id="CHEBI:30616"/>
        <dbReference type="ChEBI" id="CHEBI:57566"/>
        <dbReference type="ChEBI" id="CHEBI:58593"/>
        <dbReference type="ChEBI" id="CHEBI:456216"/>
        <dbReference type="EC" id="2.7.4.25"/>
    </reaction>
</comment>
<comment type="subcellular location">
    <subcellularLocation>
        <location evidence="1">Cytoplasm</location>
    </subcellularLocation>
</comment>
<comment type="similarity">
    <text evidence="1">Belongs to the cytidylate kinase family. Type 1 subfamily.</text>
</comment>
<proteinExistence type="inferred from homology"/>
<name>KCY_SHEDO</name>
<dbReference type="EC" id="2.7.4.25" evidence="1"/>
<dbReference type="EMBL" id="CP000302">
    <property type="protein sequence ID" value="ABE55036.1"/>
    <property type="molecule type" value="Genomic_DNA"/>
</dbReference>
<dbReference type="RefSeq" id="WP_011496193.1">
    <property type="nucleotide sequence ID" value="NC_007954.1"/>
</dbReference>
<dbReference type="SMR" id="Q12NE0"/>
<dbReference type="STRING" id="318161.Sden_1752"/>
<dbReference type="KEGG" id="sdn:Sden_1752"/>
<dbReference type="eggNOG" id="COG0283">
    <property type="taxonomic scope" value="Bacteria"/>
</dbReference>
<dbReference type="HOGENOM" id="CLU_079959_2_0_6"/>
<dbReference type="OrthoDB" id="9807434at2"/>
<dbReference type="Proteomes" id="UP000001982">
    <property type="component" value="Chromosome"/>
</dbReference>
<dbReference type="GO" id="GO:0005829">
    <property type="term" value="C:cytosol"/>
    <property type="evidence" value="ECO:0007669"/>
    <property type="project" value="TreeGrafter"/>
</dbReference>
<dbReference type="GO" id="GO:0005524">
    <property type="term" value="F:ATP binding"/>
    <property type="evidence" value="ECO:0007669"/>
    <property type="project" value="UniProtKB-UniRule"/>
</dbReference>
<dbReference type="GO" id="GO:0036430">
    <property type="term" value="F:CMP kinase activity"/>
    <property type="evidence" value="ECO:0007669"/>
    <property type="project" value="RHEA"/>
</dbReference>
<dbReference type="GO" id="GO:0036431">
    <property type="term" value="F:dCMP kinase activity"/>
    <property type="evidence" value="ECO:0007669"/>
    <property type="project" value="RHEA"/>
</dbReference>
<dbReference type="GO" id="GO:0015949">
    <property type="term" value="P:nucleobase-containing small molecule interconversion"/>
    <property type="evidence" value="ECO:0007669"/>
    <property type="project" value="TreeGrafter"/>
</dbReference>
<dbReference type="GO" id="GO:0006220">
    <property type="term" value="P:pyrimidine nucleotide metabolic process"/>
    <property type="evidence" value="ECO:0007669"/>
    <property type="project" value="UniProtKB-UniRule"/>
</dbReference>
<dbReference type="CDD" id="cd02020">
    <property type="entry name" value="CMPK"/>
    <property type="match status" value="1"/>
</dbReference>
<dbReference type="FunFam" id="3.40.50.300:FF:000262">
    <property type="entry name" value="Cytidylate kinase"/>
    <property type="match status" value="1"/>
</dbReference>
<dbReference type="Gene3D" id="3.40.50.300">
    <property type="entry name" value="P-loop containing nucleotide triphosphate hydrolases"/>
    <property type="match status" value="1"/>
</dbReference>
<dbReference type="HAMAP" id="MF_00238">
    <property type="entry name" value="Cytidyl_kinase_type1"/>
    <property type="match status" value="1"/>
</dbReference>
<dbReference type="InterPro" id="IPR003136">
    <property type="entry name" value="Cytidylate_kin"/>
</dbReference>
<dbReference type="InterPro" id="IPR011994">
    <property type="entry name" value="Cytidylate_kinase_dom"/>
</dbReference>
<dbReference type="InterPro" id="IPR027417">
    <property type="entry name" value="P-loop_NTPase"/>
</dbReference>
<dbReference type="NCBIfam" id="TIGR00017">
    <property type="entry name" value="cmk"/>
    <property type="match status" value="1"/>
</dbReference>
<dbReference type="PANTHER" id="PTHR21299:SF2">
    <property type="entry name" value="CYTIDYLATE KINASE"/>
    <property type="match status" value="1"/>
</dbReference>
<dbReference type="PANTHER" id="PTHR21299">
    <property type="entry name" value="CYTIDYLATE KINASE/PANTOATE-BETA-ALANINE LIGASE"/>
    <property type="match status" value="1"/>
</dbReference>
<dbReference type="Pfam" id="PF02224">
    <property type="entry name" value="Cytidylate_kin"/>
    <property type="match status" value="1"/>
</dbReference>
<dbReference type="SUPFAM" id="SSF52540">
    <property type="entry name" value="P-loop containing nucleoside triphosphate hydrolases"/>
    <property type="match status" value="1"/>
</dbReference>
<reference key="1">
    <citation type="submission" date="2006-03" db="EMBL/GenBank/DDBJ databases">
        <title>Complete sequence of Shewanella denitrificans OS217.</title>
        <authorList>
            <consortium name="US DOE Joint Genome Institute"/>
            <person name="Copeland A."/>
            <person name="Lucas S."/>
            <person name="Lapidus A."/>
            <person name="Barry K."/>
            <person name="Detter J.C."/>
            <person name="Glavina del Rio T."/>
            <person name="Hammon N."/>
            <person name="Israni S."/>
            <person name="Dalin E."/>
            <person name="Tice H."/>
            <person name="Pitluck S."/>
            <person name="Brettin T."/>
            <person name="Bruce D."/>
            <person name="Han C."/>
            <person name="Tapia R."/>
            <person name="Gilna P."/>
            <person name="Kiss H."/>
            <person name="Schmutz J."/>
            <person name="Larimer F."/>
            <person name="Land M."/>
            <person name="Hauser L."/>
            <person name="Kyrpides N."/>
            <person name="Lykidis A."/>
            <person name="Richardson P."/>
        </authorList>
    </citation>
    <scope>NUCLEOTIDE SEQUENCE [LARGE SCALE GENOMIC DNA]</scope>
    <source>
        <strain>OS217 / ATCC BAA-1090 / DSM 15013</strain>
    </source>
</reference>
<sequence length="227" mass="24623">MSERTPIVTIDGPSGVGKGTISQLLAQHLGWHLLDSGAIYRVLALAAIHHDVELENEEAITLLAAHLDVQFLSDADGKGIKVILEGEDVTSSIRSQECSNAASKVAALPRVREALLRRQRAFSTAPGLIADGRDMGTVVFPKAAAKIFLIASAQERAQRRYNQLQDKGFDVNIDRLLAEIIERDERDTNRAASPLKPADDALVIDTSGIGINEVFERVLEHVKASIS</sequence>